<name>I23O1_MOUSE</name>
<dbReference type="EC" id="1.13.11.52" evidence="1"/>
<dbReference type="EMBL" id="M69109">
    <property type="protein sequence ID" value="AAA37872.1"/>
    <property type="molecule type" value="mRNA"/>
</dbReference>
<dbReference type="EMBL" id="BC049931">
    <property type="protein sequence ID" value="AAH49931.1"/>
    <property type="molecule type" value="mRNA"/>
</dbReference>
<dbReference type="CCDS" id="CCDS40299.1"/>
<dbReference type="PIR" id="JH0492">
    <property type="entry name" value="JH0492"/>
</dbReference>
<dbReference type="RefSeq" id="NP_001280619.1">
    <property type="nucleotide sequence ID" value="NM_001293690.1"/>
</dbReference>
<dbReference type="RefSeq" id="NP_032350.1">
    <property type="nucleotide sequence ID" value="NM_008324.3"/>
</dbReference>
<dbReference type="SMR" id="P28776"/>
<dbReference type="BioGRID" id="200512">
    <property type="interactions" value="2"/>
</dbReference>
<dbReference type="DIP" id="DIP-48663N"/>
<dbReference type="FunCoup" id="P28776">
    <property type="interactions" value="207"/>
</dbReference>
<dbReference type="IntAct" id="P28776">
    <property type="interactions" value="4"/>
</dbReference>
<dbReference type="STRING" id="10090.ENSMUSP00000033956"/>
<dbReference type="BindingDB" id="P28776"/>
<dbReference type="ChEMBL" id="CHEMBL1075294"/>
<dbReference type="DrugCentral" id="P28776"/>
<dbReference type="GlyGen" id="P28776">
    <property type="glycosylation" value="1 site"/>
</dbReference>
<dbReference type="iPTMnet" id="P28776"/>
<dbReference type="PhosphoSitePlus" id="P28776"/>
<dbReference type="PaxDb" id="10090-ENSMUSP00000033956"/>
<dbReference type="ProteomicsDB" id="269517"/>
<dbReference type="Antibodypedia" id="5705">
    <property type="antibodies" value="1057 antibodies from 46 providers"/>
</dbReference>
<dbReference type="DNASU" id="15930"/>
<dbReference type="Ensembl" id="ENSMUST00000033956.7">
    <property type="protein sequence ID" value="ENSMUSP00000033956.7"/>
    <property type="gene ID" value="ENSMUSG00000031551.13"/>
</dbReference>
<dbReference type="GeneID" id="15930"/>
<dbReference type="KEGG" id="mmu:15930"/>
<dbReference type="UCSC" id="uc009lfa.2">
    <property type="organism name" value="mouse"/>
</dbReference>
<dbReference type="AGR" id="MGI:96416"/>
<dbReference type="CTD" id="3620"/>
<dbReference type="MGI" id="MGI:96416">
    <property type="gene designation" value="Ido1"/>
</dbReference>
<dbReference type="VEuPathDB" id="HostDB:ENSMUSG00000031551"/>
<dbReference type="eggNOG" id="ENOG502RZ6X">
    <property type="taxonomic scope" value="Eukaryota"/>
</dbReference>
<dbReference type="GeneTree" id="ENSGT00940000161410"/>
<dbReference type="InParanoid" id="P28776"/>
<dbReference type="OMA" id="WHQYSGG"/>
<dbReference type="OrthoDB" id="10262710at2759"/>
<dbReference type="PhylomeDB" id="P28776"/>
<dbReference type="TreeFam" id="TF330978"/>
<dbReference type="BRENDA" id="1.13.11.11">
    <property type="organism ID" value="3474"/>
</dbReference>
<dbReference type="BRENDA" id="1.13.11.52">
    <property type="organism ID" value="3474"/>
</dbReference>
<dbReference type="Reactome" id="R-MMU-71240">
    <property type="pathway name" value="Tryptophan catabolism"/>
</dbReference>
<dbReference type="SABIO-RK" id="P28776"/>
<dbReference type="BioGRID-ORCS" id="15930">
    <property type="hits" value="3 hits in 82 CRISPR screens"/>
</dbReference>
<dbReference type="PRO" id="PR:P28776"/>
<dbReference type="Proteomes" id="UP000000589">
    <property type="component" value="Chromosome 8"/>
</dbReference>
<dbReference type="RNAct" id="P28776">
    <property type="molecule type" value="protein"/>
</dbReference>
<dbReference type="Bgee" id="ENSMUSG00000031551">
    <property type="expression patterns" value="Expressed in dorsal striatum and 50 other cell types or tissues"/>
</dbReference>
<dbReference type="ExpressionAtlas" id="P28776">
    <property type="expression patterns" value="baseline and differential"/>
</dbReference>
<dbReference type="GO" id="GO:0005737">
    <property type="term" value="C:cytoplasm"/>
    <property type="evidence" value="ECO:0000314"/>
    <property type="project" value="MGI"/>
</dbReference>
<dbReference type="GO" id="GO:0005829">
    <property type="term" value="C:cytosol"/>
    <property type="evidence" value="ECO:0007669"/>
    <property type="project" value="UniProtKB-SubCell"/>
</dbReference>
<dbReference type="GO" id="GO:0030485">
    <property type="term" value="C:smooth muscle contractile fiber"/>
    <property type="evidence" value="ECO:0000314"/>
    <property type="project" value="MGI"/>
</dbReference>
<dbReference type="GO" id="GO:0032421">
    <property type="term" value="C:stereocilium bundle"/>
    <property type="evidence" value="ECO:0000314"/>
    <property type="project" value="MGI"/>
</dbReference>
<dbReference type="GO" id="GO:0020037">
    <property type="term" value="F:heme binding"/>
    <property type="evidence" value="ECO:0007669"/>
    <property type="project" value="InterPro"/>
</dbReference>
<dbReference type="GO" id="GO:0033754">
    <property type="term" value="F:indoleamine 2,3-dioxygenase activity"/>
    <property type="evidence" value="ECO:0007669"/>
    <property type="project" value="UniProtKB-EC"/>
</dbReference>
<dbReference type="GO" id="GO:0046872">
    <property type="term" value="F:metal ion binding"/>
    <property type="evidence" value="ECO:0007669"/>
    <property type="project" value="UniProtKB-KW"/>
</dbReference>
<dbReference type="GO" id="GO:0004833">
    <property type="term" value="F:tryptophan 2,3-dioxygenase activity"/>
    <property type="evidence" value="ECO:0000314"/>
    <property type="project" value="MGI"/>
</dbReference>
<dbReference type="GO" id="GO:0006952">
    <property type="term" value="P:defense response"/>
    <property type="evidence" value="ECO:0000304"/>
    <property type="project" value="MGI"/>
</dbReference>
<dbReference type="GO" id="GO:0006954">
    <property type="term" value="P:inflammatory response"/>
    <property type="evidence" value="ECO:0000315"/>
    <property type="project" value="MGI"/>
</dbReference>
<dbReference type="GO" id="GO:0034276">
    <property type="term" value="P:kynurenic acid biosynthetic process"/>
    <property type="evidence" value="ECO:0000315"/>
    <property type="project" value="MGI"/>
</dbReference>
<dbReference type="GO" id="GO:0019441">
    <property type="term" value="P:L-tryptophan catabolic process to kynurenine"/>
    <property type="evidence" value="ECO:0000314"/>
    <property type="project" value="MGI"/>
</dbReference>
<dbReference type="GO" id="GO:0033555">
    <property type="term" value="P:multicellular organismal response to stress"/>
    <property type="evidence" value="ECO:0000315"/>
    <property type="project" value="MGI"/>
</dbReference>
<dbReference type="GO" id="GO:0046007">
    <property type="term" value="P:negative regulation of activated T cell proliferation"/>
    <property type="evidence" value="ECO:0000315"/>
    <property type="project" value="MGI"/>
</dbReference>
<dbReference type="GO" id="GO:0032693">
    <property type="term" value="P:negative regulation of interleukin-10 production"/>
    <property type="evidence" value="ECO:0000315"/>
    <property type="project" value="MGI"/>
</dbReference>
<dbReference type="GO" id="GO:0070233">
    <property type="term" value="P:negative regulation of T cell apoptotic process"/>
    <property type="evidence" value="ECO:0000315"/>
    <property type="project" value="MGI"/>
</dbReference>
<dbReference type="GO" id="GO:0042130">
    <property type="term" value="P:negative regulation of T cell proliferation"/>
    <property type="evidence" value="ECO:0000315"/>
    <property type="project" value="MGI"/>
</dbReference>
<dbReference type="GO" id="GO:0043065">
    <property type="term" value="P:positive regulation of apoptotic process"/>
    <property type="evidence" value="ECO:0000315"/>
    <property type="project" value="MGI"/>
</dbReference>
<dbReference type="GO" id="GO:0002678">
    <property type="term" value="P:positive regulation of chronic inflammatory response"/>
    <property type="evidence" value="ECO:0000315"/>
    <property type="project" value="MGI"/>
</dbReference>
<dbReference type="GO" id="GO:0032735">
    <property type="term" value="P:positive regulation of interleukin-12 production"/>
    <property type="evidence" value="ECO:0000315"/>
    <property type="project" value="MGI"/>
</dbReference>
<dbReference type="GO" id="GO:0070234">
    <property type="term" value="P:positive regulation of T cell apoptotic process"/>
    <property type="evidence" value="ECO:0007669"/>
    <property type="project" value="Ensembl"/>
</dbReference>
<dbReference type="GO" id="GO:0002666">
    <property type="term" value="P:positive regulation of T cell tolerance induction"/>
    <property type="evidence" value="ECO:0000315"/>
    <property type="project" value="MGI"/>
</dbReference>
<dbReference type="GO" id="GO:0002830">
    <property type="term" value="P:positive regulation of type 2 immune response"/>
    <property type="evidence" value="ECO:0000315"/>
    <property type="project" value="MGI"/>
</dbReference>
<dbReference type="GO" id="GO:0019805">
    <property type="term" value="P:quinolinate biosynthetic process"/>
    <property type="evidence" value="ECO:0000314"/>
    <property type="project" value="UniProt"/>
</dbReference>
<dbReference type="GO" id="GO:0032496">
    <property type="term" value="P:response to lipopolysaccharide"/>
    <property type="evidence" value="ECO:0000315"/>
    <property type="project" value="MGI"/>
</dbReference>
<dbReference type="GO" id="GO:0036269">
    <property type="term" value="P:swimming behavior"/>
    <property type="evidence" value="ECO:0000315"/>
    <property type="project" value="MGI"/>
</dbReference>
<dbReference type="GO" id="GO:0042098">
    <property type="term" value="P:T cell proliferation"/>
    <property type="evidence" value="ECO:0000315"/>
    <property type="project" value="MGI"/>
</dbReference>
<dbReference type="FunFam" id="1.20.58.480:FF:000003">
    <property type="entry name" value="Indoleamine 2,3-dioxygenase 1"/>
    <property type="match status" value="1"/>
</dbReference>
<dbReference type="Gene3D" id="1.20.58.480">
    <property type="match status" value="1"/>
</dbReference>
<dbReference type="InterPro" id="IPR000898">
    <property type="entry name" value="Indolamine_dOase"/>
</dbReference>
<dbReference type="InterPro" id="IPR037217">
    <property type="entry name" value="Trp/Indoleamine_2_3_dOase-like"/>
</dbReference>
<dbReference type="PANTHER" id="PTHR28657">
    <property type="entry name" value="INDOLEAMINE 2,3-DIOXYGENASE"/>
    <property type="match status" value="1"/>
</dbReference>
<dbReference type="PANTHER" id="PTHR28657:SF2">
    <property type="entry name" value="INDOLEAMINE 2,3-DIOXYGENASE 1"/>
    <property type="match status" value="1"/>
</dbReference>
<dbReference type="Pfam" id="PF01231">
    <property type="entry name" value="IDO"/>
    <property type="match status" value="1"/>
</dbReference>
<dbReference type="SUPFAM" id="SSF140959">
    <property type="entry name" value="Indolic compounds 2,3-dioxygenase-like"/>
    <property type="match status" value="1"/>
</dbReference>
<dbReference type="PROSITE" id="PS00876">
    <property type="entry name" value="IDO_1"/>
    <property type="match status" value="1"/>
</dbReference>
<dbReference type="PROSITE" id="PS00877">
    <property type="entry name" value="IDO_2"/>
    <property type="match status" value="1"/>
</dbReference>
<organism>
    <name type="scientific">Mus musculus</name>
    <name type="common">Mouse</name>
    <dbReference type="NCBI Taxonomy" id="10090"/>
    <lineage>
        <taxon>Eukaryota</taxon>
        <taxon>Metazoa</taxon>
        <taxon>Chordata</taxon>
        <taxon>Craniata</taxon>
        <taxon>Vertebrata</taxon>
        <taxon>Euteleostomi</taxon>
        <taxon>Mammalia</taxon>
        <taxon>Eutheria</taxon>
        <taxon>Euarchontoglires</taxon>
        <taxon>Glires</taxon>
        <taxon>Rodentia</taxon>
        <taxon>Myomorpha</taxon>
        <taxon>Muroidea</taxon>
        <taxon>Muridae</taxon>
        <taxon>Murinae</taxon>
        <taxon>Mus</taxon>
        <taxon>Mus</taxon>
    </lineage>
</organism>
<sequence length="407" mass="45641">MALSKISPTEGSRRILEDHHIDEDVGFALPHPLVELPDAYSPWVLVARNLPVLIENGQLREEVEKLPTLSTDGLRGHRLQRLAHLALGYITMAYVWNRGDDDVRKVLPRNIAVPYCELSEKLGLPPILSYADCVLANWKKKDPNGPMTYENMDILFSFPGGDCDKGFFLVSLLVEIAASPAIKAIPTVSSAVERQDLKALEKALHDIATSLEKAKEIFKRMRDFVDPDTFFHVLRIYLSGWKCSSKLPEGLLYEGVWDTPKMFSGGSAGQSSIFQSLDVLLGIKHEAGKESPAEFLQEMREYMPPAHRNFLFFLESAPPVREFVISRHNEDLTKAYNECVNGLVSVRKFHLAIVDTYIMKPSKKKPTDGDKSEEPSNVESRGTGGTNPMTFLRSVKDTTEKALLSWP</sequence>
<comment type="function">
    <text evidence="1 3 8">Catalyzes the first and rate limiting step of the catabolism of the essential amino acid tryptophan along the kynurenine pathway. Involved in the peripheral immune tolerance, contributing to maintain homeostasis by preventing autoimmunity or immunopathology that would result from uncontrolled and overreacting immune responses. Tryptophan shortage inhibits T lymphocytes division and accumulation of tryptophan catabolites induces T-cell apoptosis and differentiation of regulatory T-cells. Acts as a suppressor of anti-tumor immunity (PubMed:25691885). Limits the growth of intracellular pathogens by depriving tryptophan. Protects the fetus from maternal immune rejection (PubMed:15063630).</text>
</comment>
<comment type="catalytic activity">
    <reaction evidence="1">
        <text>D-tryptophan + O2 = N-formyl-D-kynurenine</text>
        <dbReference type="Rhea" id="RHEA:14189"/>
        <dbReference type="ChEBI" id="CHEBI:15379"/>
        <dbReference type="ChEBI" id="CHEBI:57719"/>
        <dbReference type="ChEBI" id="CHEBI:60051"/>
        <dbReference type="EC" id="1.13.11.52"/>
    </reaction>
</comment>
<comment type="catalytic activity">
    <reaction evidence="1">
        <text>L-tryptophan + O2 = N-formyl-L-kynurenine</text>
        <dbReference type="Rhea" id="RHEA:24536"/>
        <dbReference type="ChEBI" id="CHEBI:15379"/>
        <dbReference type="ChEBI" id="CHEBI:57912"/>
        <dbReference type="ChEBI" id="CHEBI:58629"/>
        <dbReference type="EC" id="1.13.11.52"/>
    </reaction>
</comment>
<comment type="cofactor">
    <cofactor evidence="1">
        <name>heme b</name>
        <dbReference type="ChEBI" id="CHEBI:60344"/>
    </cofactor>
    <text evidence="1">Binds 1 heme group per subunit.</text>
</comment>
<comment type="activity regulation">
    <text evidence="1">Activity is inhibited by and MTH-trp (methylthiohydantoin-DL-tryptophan), modestly inhibited by L-1MT (1-methyl-L-tryptophan) but not D-1MT (1-methyl-D-tryptophan).</text>
</comment>
<comment type="biophysicochemical properties">
    <kinetics>
        <KM evidence="4">28.1 uM for L-tryptophan</KM>
        <KM evidence="4">2.87 mM for D-tryptophan</KM>
        <text>Catalytic efficiency for L-tryptophan is 90 times higher than for D-tryptophan.</text>
    </kinetics>
</comment>
<comment type="subunit">
    <text evidence="8">Monomer.</text>
</comment>
<comment type="interaction">
    <interactant intactId="EBI-4410822">
        <id>P28776</id>
    </interactant>
    <interactant intactId="EBI-397236">
        <id>P35235</id>
        <label>Ptpn11</label>
    </interactant>
    <organismsDiffer>false</organismsDiffer>
    <experiments>5</experiments>
</comment>
<comment type="subcellular location">
    <subcellularLocation>
        <location evidence="6">Cytoplasm</location>
        <location evidence="6">Cytosol</location>
    </subcellularLocation>
</comment>
<comment type="tissue specificity">
    <text evidence="3 6 8">Highly expressed in epididymis, duodemum, jejunum, ileum, colon and spleen (PubMed:19741271). Highly expressed in epididymis, prostate, duodemum, jejunum, ileum, colon and spleen, not detected in the liver (at protein level) (PubMed:19741271). Expressed in tumors only upon exposure to IFN gamma (PubMed:25691885). Constitutively expressed in placenta in trophoblast cells (PubMed:15063630). Expression is restricted to perinuclear regions of primary trophoblast giant cells (TGCs) of fetal origin at mid-gestation (10.5 dpc). After placentation (14 dpc), no IDO expression was detected at the maternal-fetal interface (PubMed:15063630).</text>
</comment>
<comment type="induction">
    <text evidence="1">By IFNG/IFN-gamma in most cells.</text>
</comment>
<comment type="disruption phenotype">
    <text evidence="5 7">Knockout mice display normal development and function of dendritic cells, on T- or B-cells development (PubMed:18384884). They display increased sensitivity to the induction of inflammatory and autoimmune reactions (PubMed:22157149). They produce litters of normal sizes at normal rates, implying that compensatory or redundant immunosuppressive mechanisms protected allogeneic fetuses during gestation in knockout mice. Knockout mice display cardiac and gastrointestinal liabilities (PubMed:22157149).</text>
</comment>
<comment type="miscellaneous">
    <text evidence="1">Ido1 and Ido2 are 2 distinct enzymes which catalyze the same reaction. Ido2 affinity for tryptophan is much lower than that of Ido1. Ido2 may play a role as a negative regulator of Ido1 by competing for heme-binding with Ido1. Low efficiency Ido2 enzymes have been conserved throughout vertebrate evolution, whereas higher efficiency Ido1 enzymes are dispensable in many lower vertebrate lineages. Ido1 may have arisen by gene duplication of a more ancient proto-IDO gene before the divergence of marsupial and eutherian (placental) mammals.</text>
</comment>
<comment type="similarity">
    <text evidence="9">Belongs to the indoleamine 2,3-dioxygenase family.</text>
</comment>
<feature type="chain" id="PRO_0000215205" description="Indoleamine 2,3-dioxygenase 1">
    <location>
        <begin position="1"/>
        <end position="407"/>
    </location>
</feature>
<feature type="region of interest" description="Disordered" evidence="2">
    <location>
        <begin position="362"/>
        <end position="407"/>
    </location>
</feature>
<feature type="compositionally biased region" description="Basic and acidic residues" evidence="2">
    <location>
        <begin position="365"/>
        <end position="374"/>
    </location>
</feature>
<feature type="binding site" description="proximal binding residue" evidence="1">
    <location>
        <position position="350"/>
    </location>
    <ligand>
        <name>heme b</name>
        <dbReference type="ChEBI" id="CHEBI:60344"/>
    </ligand>
    <ligandPart>
        <name>Fe</name>
        <dbReference type="ChEBI" id="CHEBI:18248"/>
    </ligandPart>
</feature>
<accession>P28776</accession>
<evidence type="ECO:0000250" key="1">
    <source>
        <dbReference type="UniProtKB" id="P14902"/>
    </source>
</evidence>
<evidence type="ECO:0000256" key="2">
    <source>
        <dbReference type="SAM" id="MobiDB-lite"/>
    </source>
</evidence>
<evidence type="ECO:0000269" key="3">
    <source>
    </source>
</evidence>
<evidence type="ECO:0000269" key="4">
    <source>
    </source>
</evidence>
<evidence type="ECO:0000269" key="5">
    <source>
    </source>
</evidence>
<evidence type="ECO:0000269" key="6">
    <source>
    </source>
</evidence>
<evidence type="ECO:0000269" key="7">
    <source>
    </source>
</evidence>
<evidence type="ECO:0000303" key="8">
    <source>
    </source>
</evidence>
<evidence type="ECO:0000305" key="9"/>
<evidence type="ECO:0000312" key="10">
    <source>
        <dbReference type="MGI" id="MGI:96416"/>
    </source>
</evidence>
<keyword id="KW-0963">Cytoplasm</keyword>
<keyword id="KW-0223">Dioxygenase</keyword>
<keyword id="KW-0903">Direct protein sequencing</keyword>
<keyword id="KW-0349">Heme</keyword>
<keyword id="KW-0391">Immunity</keyword>
<keyword id="KW-0408">Iron</keyword>
<keyword id="KW-0479">Metal-binding</keyword>
<keyword id="KW-0560">Oxidoreductase</keyword>
<keyword id="KW-1185">Reference proteome</keyword>
<keyword id="KW-0823">Tryptophan catabolism</keyword>
<proteinExistence type="evidence at protein level"/>
<gene>
    <name evidence="10" type="primary">Ido1</name>
    <name type="synonym">Ido</name>
    <name type="synonym">Indo</name>
</gene>
<reference key="1">
    <citation type="journal article" date="1991" name="Gene">
        <title>Cloning and expression of a cDNA encoding mouse indoleamine 2,3-dioxygenase.</title>
        <authorList>
            <person name="Habara-Ohkubo A."/>
            <person name="Takikawa O."/>
            <person name="Yoshida R."/>
        </authorList>
    </citation>
    <scope>NUCLEOTIDE SEQUENCE [MRNA]</scope>
    <scope>PARTIAL PROTEIN SEQUENCE</scope>
</reference>
<reference key="2">
    <citation type="journal article" date="2004" name="Genome Res.">
        <title>The status, quality, and expansion of the NIH full-length cDNA project: the Mammalian Gene Collection (MGC).</title>
        <authorList>
            <consortium name="The MGC Project Team"/>
        </authorList>
    </citation>
    <scope>NUCLEOTIDE SEQUENCE [LARGE SCALE MRNA]</scope>
    <source>
        <strain>NMRI</strain>
        <tissue>Mammary gland</tissue>
    </source>
</reference>
<reference key="3">
    <citation type="journal article" date="2004" name="J. Reprod. Immunol.">
        <title>Indoleamine 2,3-dioxygenase expression is restricted to fetal trophoblast giant cells during murine gestation and is maternal genome specific.</title>
        <authorList>
            <person name="Baban B."/>
            <person name="Chandler P."/>
            <person name="McCool D."/>
            <person name="Marshall B."/>
            <person name="Munn D.H."/>
            <person name="Mellor A.L."/>
        </authorList>
    </citation>
    <scope>FUNCTION</scope>
    <scope>TISSUE SPECIFICITY</scope>
</reference>
<reference key="4">
    <citation type="journal article" date="2007" name="J. Mol. Evol.">
        <title>Evolution of vertebrate indoleamine 2,3-dioxygenases.</title>
        <authorList>
            <person name="Yuasa H.J."/>
            <person name="Takubo M."/>
            <person name="Takahashi A."/>
            <person name="Hasegawa T."/>
            <person name="Noma H."/>
            <person name="Suzuki T."/>
        </authorList>
    </citation>
    <scope>BIOPHYSICOCHEMICAL PROPERTIES</scope>
</reference>
<reference key="5">
    <citation type="journal article" date="2008" name="Immunol. Lett.">
        <title>Normal development and function of dendritic cells in mice lacking IDO-1 expression.</title>
        <authorList>
            <person name="de Faudeur G."/>
            <person name="de Trez C."/>
            <person name="Muraille E."/>
            <person name="Leo O."/>
        </authorList>
    </citation>
    <scope>DISRUPTION PHENOTYPE</scope>
</reference>
<reference key="6">
    <citation type="journal article" date="2010" name="J. Histochem. Cytochem.">
        <title>Indoleamine 2,3-dioxygenase tissue distribution and cellular localization in mice: implications for its biological functions.</title>
        <authorList>
            <person name="Dai X."/>
            <person name="Zhu B.T."/>
        </authorList>
    </citation>
    <scope>SUBCELLULAR LOCATION</scope>
    <scope>TISSUE SPECIFICITY</scope>
</reference>
<reference key="7">
    <citation type="journal article" date="2011" name="Cancer Biol. Ther.">
        <title>Cardiac and gastrointestinal liabilities caused by deficiency in the immune modulatory enzyme indoleamine 2,3-dioxygenase.</title>
        <authorList>
            <person name="Chang M.Y."/>
            <person name="Smith C."/>
            <person name="DuHadaway J.B."/>
            <person name="Pyle J.R."/>
            <person name="Boulden J."/>
            <person name="Soler A.P."/>
            <person name="Muller A.J."/>
            <person name="Laury-Kleintop L.D."/>
            <person name="Prendergast G.C."/>
        </authorList>
    </citation>
    <scope>DISRUPTION PHENOTYPE</scope>
</reference>
<reference key="8">
    <citation type="journal article" date="2015" name="Front. Immunol.">
        <title>Tryptophan-degrading enzymes in tumoral immune resistance.</title>
        <authorList>
            <person name="van Baren N."/>
            <person name="Van den Eynde B.J."/>
        </authorList>
    </citation>
    <scope>REVIEW</scope>
    <scope>TISSUE SPECIFICITY</scope>
</reference>
<protein>
    <recommendedName>
        <fullName>Indoleamine 2,3-dioxygenase 1</fullName>
        <shortName>IDO-1</shortName>
        <ecNumber evidence="1">1.13.11.52</ecNumber>
    </recommendedName>
    <alternativeName>
        <fullName>Indoleamine-pyrrole 2,3-dioxygenase</fullName>
    </alternativeName>
</protein>